<reference key="1">
    <citation type="journal article" date="1992" name="Gene">
        <title>Nucleotide sequence of gene cryIIID encoding a novel coleopteran-active crystal protein from strain BTI109P of Bacillus thuringiensis subsp. kurstaki.</title>
        <authorList>
            <person name="Lambert B."/>
            <person name="Theunis W."/>
            <person name="Aguda R."/>
            <person name="Van Audenhove K."/>
            <person name="Decock C."/>
            <person name="Jansens S."/>
            <person name="Seurinck J."/>
            <person name="Peferoen M."/>
        </authorList>
    </citation>
    <scope>NUCLEOTIDE SEQUENCE [GENOMIC DNA]</scope>
    <source>
        <strain>BTI109P</strain>
    </source>
</reference>
<sequence length="649" mass="73027">MNPNNRSEHDTIKATENNEVSNNHAQYPLADTPTLEELNYKEFLRRTTDNNVEALDSSTTKDAIQKGISIIGDLLGVVGFPYGGALVSFYTNLLNTIWPGEDPLKAFMQQVEALIDQKIADYAKDKATAELQGLKNVFKDYVSALDSWDKTPLTLRDGRSQGRIRELFSQAESHFRRSMPSFAVSGYEVLFLPTYAQAANTHLLLLKDAQIYGTDWGYSTDDLNEFHTKQKDLTIEYTNHCAKWYKAGLDKLRGSTYEEWVKFNRYRREMTLTVLDLITLFPLYDVRTYTKGVKTELTRDVLTDPIVAVNNMNGYGTTFSNIENYIRKPHLFDYLHAIQFHSRLQPGYFGTDSFNYWSGNYVSTRSSIGSDEIIRSPFYGNKSTLDVQNLEFNGEKVFRAVANGNLAVWPVGTGGTKIHSGVTKVQFSQYNDRKDEVRTQTYDSKRNVGGIVFDSIDQLPPITTDESLEKAYSHQLNYVRCFLLQGGRGIIPVFTWTHKSVDFYNTLDSEKITQIPFVKAFILVNSTSVVAGPGFTGGDIIKCTNGSGLTLYVTPAPDLTYSKTYKIRIRYASTSQVRFGIDLGSYTHSISYFDKTMDKGNTLTYNSFNLSSVSRPIEISGGNKIGVSVGGIGSGDEVYIDKIEFIPMD</sequence>
<gene>
    <name type="primary">cry3Ca</name>
    <name type="synonym">cryIIIC(a)</name>
    <name type="synonym">cryIIId</name>
</gene>
<evidence type="ECO:0000256" key="1">
    <source>
        <dbReference type="SAM" id="MobiDB-lite"/>
    </source>
</evidence>
<evidence type="ECO:0000305" key="2"/>
<proteinExistence type="evidence at transcript level"/>
<feature type="chain" id="PRO_0000174062" description="Pesticidal crystal protein Cry3Ca">
    <location>
        <begin position="1"/>
        <end position="649"/>
    </location>
</feature>
<feature type="region of interest" description="Disordered" evidence="1">
    <location>
        <begin position="1"/>
        <end position="29"/>
    </location>
</feature>
<feature type="compositionally biased region" description="Basic and acidic residues" evidence="1">
    <location>
        <begin position="1"/>
        <end position="13"/>
    </location>
</feature>
<feature type="compositionally biased region" description="Polar residues" evidence="1">
    <location>
        <begin position="14"/>
        <end position="25"/>
    </location>
</feature>
<organism>
    <name type="scientific">Bacillus thuringiensis subsp. kurstaki</name>
    <dbReference type="NCBI Taxonomy" id="29339"/>
    <lineage>
        <taxon>Bacteria</taxon>
        <taxon>Bacillati</taxon>
        <taxon>Bacillota</taxon>
        <taxon>Bacilli</taxon>
        <taxon>Bacillales</taxon>
        <taxon>Bacillaceae</taxon>
        <taxon>Bacillus</taxon>
        <taxon>Bacillus cereus group</taxon>
    </lineage>
</organism>
<keyword id="KW-0749">Sporulation</keyword>
<keyword id="KW-0800">Toxin</keyword>
<keyword id="KW-0843">Virulence</keyword>
<comment type="function">
    <text>Promotes colloidosmotic lysis by binding to the midgut epithelial cells of Coleoptera.</text>
</comment>
<comment type="developmental stage">
    <text>The crystal protein is produced during sporulation and is accumulated both as an inclusion and as part of the spore coat.</text>
</comment>
<comment type="miscellaneous">
    <text>Toxic segment of the protein is located in the N-terminus.</text>
</comment>
<comment type="similarity">
    <text evidence="2">Belongs to the delta endotoxin family.</text>
</comment>
<protein>
    <recommendedName>
        <fullName>Pesticidal crystal protein Cry3Ca</fullName>
    </recommendedName>
    <alternativeName>
        <fullName>73 kDa crystal protein</fullName>
    </alternativeName>
    <alternativeName>
        <fullName>Crystaline entomocidal protoxin</fullName>
    </alternativeName>
    <alternativeName>
        <fullName>Insecticidal delta-endotoxin CryIIIC(a)</fullName>
    </alternativeName>
</protein>
<accession>Q45744</accession>
<dbReference type="EMBL" id="X59797">
    <property type="protein sequence ID" value="CAA42469.1"/>
    <property type="molecule type" value="Genomic_DNA"/>
</dbReference>
<dbReference type="PIR" id="JH0261">
    <property type="entry name" value="JH0261"/>
</dbReference>
<dbReference type="SMR" id="Q45744"/>
<dbReference type="GO" id="GO:0005102">
    <property type="term" value="F:signaling receptor binding"/>
    <property type="evidence" value="ECO:0007669"/>
    <property type="project" value="InterPro"/>
</dbReference>
<dbReference type="GO" id="GO:0090729">
    <property type="term" value="F:toxin activity"/>
    <property type="evidence" value="ECO:0007669"/>
    <property type="project" value="UniProtKB-KW"/>
</dbReference>
<dbReference type="GO" id="GO:0030435">
    <property type="term" value="P:sporulation resulting in formation of a cellular spore"/>
    <property type="evidence" value="ECO:0007669"/>
    <property type="project" value="UniProtKB-KW"/>
</dbReference>
<dbReference type="GO" id="GO:0001907">
    <property type="term" value="P:symbiont-mediated killing of host cell"/>
    <property type="evidence" value="ECO:0007669"/>
    <property type="project" value="InterPro"/>
</dbReference>
<dbReference type="CDD" id="cd04085">
    <property type="entry name" value="delta_endotoxin_C"/>
    <property type="match status" value="1"/>
</dbReference>
<dbReference type="Gene3D" id="2.60.120.260">
    <property type="entry name" value="Galactose-binding domain-like"/>
    <property type="match status" value="1"/>
</dbReference>
<dbReference type="Gene3D" id="2.100.10.10">
    <property type="entry name" value="Pesticidal crystal protein, central domain"/>
    <property type="match status" value="1"/>
</dbReference>
<dbReference type="Gene3D" id="1.20.190.10">
    <property type="entry name" value="Pesticidal crystal protein, N-terminal domain"/>
    <property type="match status" value="1"/>
</dbReference>
<dbReference type="InterPro" id="IPR008979">
    <property type="entry name" value="Galactose-bd-like_sf"/>
</dbReference>
<dbReference type="InterPro" id="IPR038979">
    <property type="entry name" value="Pest_crys"/>
</dbReference>
<dbReference type="InterPro" id="IPR005638">
    <property type="entry name" value="Pest_crys_dom-III"/>
</dbReference>
<dbReference type="InterPro" id="IPR005639">
    <property type="entry name" value="Pest_crys_dom_I"/>
</dbReference>
<dbReference type="InterPro" id="IPR036716">
    <property type="entry name" value="Pest_crys_N_sf"/>
</dbReference>
<dbReference type="InterPro" id="IPR036399">
    <property type="entry name" value="Pest_cryst_cen_dom_sf"/>
</dbReference>
<dbReference type="InterPro" id="IPR001178">
    <property type="entry name" value="Pest_cryst_dom_II"/>
</dbReference>
<dbReference type="PANTHER" id="PTHR37003">
    <property type="entry name" value="ENDOTOXIN_N DOMAIN-CONTAINING PROTEIN-RELATED"/>
    <property type="match status" value="1"/>
</dbReference>
<dbReference type="PANTHER" id="PTHR37003:SF2">
    <property type="entry name" value="PESTICIDAL CRYSTAL PROTEIN N-TERMINAL DOMAIN-CONTAINING PROTEIN"/>
    <property type="match status" value="1"/>
</dbReference>
<dbReference type="Pfam" id="PF03944">
    <property type="entry name" value="Endotoxin_C"/>
    <property type="match status" value="1"/>
</dbReference>
<dbReference type="Pfam" id="PF00555">
    <property type="entry name" value="Endotoxin_M"/>
    <property type="match status" value="1"/>
</dbReference>
<dbReference type="Pfam" id="PF03945">
    <property type="entry name" value="Endotoxin_N"/>
    <property type="match status" value="1"/>
</dbReference>
<dbReference type="SUPFAM" id="SSF51096">
    <property type="entry name" value="delta-Endotoxin (insectocide), middle domain"/>
    <property type="match status" value="1"/>
</dbReference>
<dbReference type="SUPFAM" id="SSF56849">
    <property type="entry name" value="delta-Endotoxin (insectocide), N-terminal domain"/>
    <property type="match status" value="1"/>
</dbReference>
<dbReference type="SUPFAM" id="SSF49785">
    <property type="entry name" value="Galactose-binding domain-like"/>
    <property type="match status" value="1"/>
</dbReference>
<name>CR3CA_BACTK</name>